<name>FA20C_CAEEL</name>
<organism>
    <name type="scientific">Caenorhabditis elegans</name>
    <dbReference type="NCBI Taxonomy" id="6239"/>
    <lineage>
        <taxon>Eukaryota</taxon>
        <taxon>Metazoa</taxon>
        <taxon>Ecdysozoa</taxon>
        <taxon>Nematoda</taxon>
        <taxon>Chromadorea</taxon>
        <taxon>Rhabditida</taxon>
        <taxon>Rhabditina</taxon>
        <taxon>Rhabditomorpha</taxon>
        <taxon>Rhabditoidea</taxon>
        <taxon>Rhabditidae</taxon>
        <taxon>Peloderinae</taxon>
        <taxon>Caenorhabditis</taxon>
    </lineage>
</organism>
<gene>
    <name evidence="8" type="primary">famk-1</name>
    <name evidence="8" type="ORF">H03A11.1</name>
</gene>
<feature type="propeptide" id="PRO_0000456170" evidence="7">
    <location>
        <begin position="1"/>
        <end status="unknown"/>
    </location>
</feature>
<feature type="chain" id="PRO_0000433616" description="Extracellular serine/threonine protein kinase CeFam20" evidence="7">
    <location>
        <begin status="unknown"/>
        <end position="512"/>
    </location>
</feature>
<feature type="topological domain" description="Cytoplasmic" evidence="7">
    <location>
        <begin position="1"/>
        <end position="6"/>
    </location>
</feature>
<feature type="transmembrane region" description="Helical; Signal-anchor for type II membrane protein" evidence="3">
    <location>
        <begin position="7"/>
        <end position="26"/>
    </location>
</feature>
<feature type="topological domain" description="Lumenal" evidence="7">
    <location>
        <begin position="27"/>
        <end position="512"/>
    </location>
</feature>
<feature type="region of interest" description="Disordered" evidence="4">
    <location>
        <begin position="486"/>
        <end position="512"/>
    </location>
</feature>
<feature type="compositionally biased region" description="Acidic residues" evidence="4">
    <location>
        <begin position="489"/>
        <end position="499"/>
    </location>
</feature>
<feature type="compositionally biased region" description="Basic and acidic residues" evidence="4">
    <location>
        <begin position="500"/>
        <end position="512"/>
    </location>
</feature>
<feature type="active site" evidence="2">
    <location>
        <position position="366"/>
    </location>
</feature>
<feature type="binding site" evidence="5 9">
    <location>
        <position position="176"/>
    </location>
    <ligand>
        <name>ATP</name>
        <dbReference type="ChEBI" id="CHEBI:30616"/>
    </ligand>
</feature>
<feature type="binding site" evidence="5 9">
    <location>
        <position position="192"/>
    </location>
    <ligand>
        <name>ATP</name>
        <dbReference type="ChEBI" id="CHEBI:30616"/>
    </ligand>
</feature>
<feature type="binding site" evidence="5 9">
    <location>
        <position position="213"/>
    </location>
    <ligand>
        <name>ATP</name>
        <dbReference type="ChEBI" id="CHEBI:30616"/>
    </ligand>
</feature>
<feature type="binding site" evidence="5 9">
    <location>
        <position position="213"/>
    </location>
    <ligand>
        <name>Mn(2+)</name>
        <dbReference type="ChEBI" id="CHEBI:29035"/>
    </ligand>
</feature>
<feature type="binding site" evidence="5 9">
    <location>
        <begin position="295"/>
        <end position="298"/>
    </location>
    <ligand>
        <name>ATP</name>
        <dbReference type="ChEBI" id="CHEBI:30616"/>
    </ligand>
</feature>
<feature type="binding site" evidence="5 9">
    <location>
        <position position="371"/>
    </location>
    <ligand>
        <name>ATP</name>
        <dbReference type="ChEBI" id="CHEBI:30616"/>
    </ligand>
</feature>
<feature type="binding site" evidence="5 9">
    <location>
        <position position="387"/>
    </location>
    <ligand>
        <name>ATP</name>
        <dbReference type="ChEBI" id="CHEBI:30616"/>
    </ligand>
</feature>
<feature type="binding site" evidence="5 9">
    <location>
        <position position="387"/>
    </location>
    <ligand>
        <name>Mn(2+)</name>
        <dbReference type="ChEBI" id="CHEBI:29035"/>
    </ligand>
</feature>
<feature type="glycosylation site" description="N-linked (GlcNAc...) asparagine" evidence="5 9">
    <location>
        <position position="113"/>
    </location>
</feature>
<feature type="glycosylation site" description="N-linked (GlcNAc...) asparagine" evidence="5 9">
    <location>
        <position position="242"/>
    </location>
</feature>
<feature type="disulfide bond" evidence="5 9">
    <location>
        <begin position="110"/>
        <end position="144"/>
    </location>
</feature>
<feature type="disulfide bond" evidence="5 9">
    <location>
        <begin position="268"/>
        <end position="284"/>
    </location>
</feature>
<feature type="disulfide bond" evidence="5 9">
    <location>
        <begin position="273"/>
        <end position="277"/>
    </location>
</feature>
<feature type="disulfide bond" evidence="5 9">
    <location>
        <begin position="333"/>
        <end position="409"/>
    </location>
</feature>
<feature type="disulfide bond" evidence="5 9">
    <location>
        <begin position="410"/>
        <end position="469"/>
    </location>
</feature>
<feature type="helix" evidence="11">
    <location>
        <begin position="68"/>
        <end position="70"/>
    </location>
</feature>
<feature type="helix" evidence="11">
    <location>
        <begin position="87"/>
        <end position="95"/>
    </location>
</feature>
<feature type="turn" evidence="11">
    <location>
        <begin position="96"/>
        <end position="99"/>
    </location>
</feature>
<feature type="helix" evidence="11">
    <location>
        <begin position="102"/>
        <end position="106"/>
    </location>
</feature>
<feature type="strand" evidence="11">
    <location>
        <begin position="109"/>
        <end position="111"/>
    </location>
</feature>
<feature type="helix" evidence="11">
    <location>
        <begin position="116"/>
        <end position="120"/>
    </location>
</feature>
<feature type="helix" evidence="11">
    <location>
        <begin position="133"/>
        <end position="139"/>
    </location>
</feature>
<feature type="strand" evidence="11">
    <location>
        <begin position="142"/>
        <end position="144"/>
    </location>
</feature>
<feature type="helix" evidence="11">
    <location>
        <begin position="150"/>
        <end position="162"/>
    </location>
</feature>
<feature type="strand" evidence="11">
    <location>
        <begin position="165"/>
        <end position="170"/>
    </location>
</feature>
<feature type="strand" evidence="12">
    <location>
        <begin position="173"/>
        <end position="176"/>
    </location>
</feature>
<feature type="strand" evidence="11">
    <location>
        <begin position="179"/>
        <end position="183"/>
    </location>
</feature>
<feature type="strand" evidence="11">
    <location>
        <begin position="188"/>
        <end position="193"/>
    </location>
</feature>
<feature type="turn" evidence="11">
    <location>
        <begin position="208"/>
        <end position="210"/>
    </location>
</feature>
<feature type="helix" evidence="11">
    <location>
        <begin position="215"/>
        <end position="227"/>
    </location>
</feature>
<feature type="strand" evidence="11">
    <location>
        <begin position="236"/>
        <end position="242"/>
    </location>
</feature>
<feature type="helix" evidence="11">
    <location>
        <begin position="243"/>
        <end position="248"/>
    </location>
</feature>
<feature type="helix" evidence="11">
    <location>
        <begin position="253"/>
        <end position="256"/>
    </location>
</feature>
<feature type="strand" evidence="11">
    <location>
        <begin position="259"/>
        <end position="261"/>
    </location>
</feature>
<feature type="strand" evidence="11">
    <location>
        <begin position="267"/>
        <end position="269"/>
    </location>
</feature>
<feature type="turn" evidence="12">
    <location>
        <begin position="274"/>
        <end position="276"/>
    </location>
</feature>
<feature type="strand" evidence="11">
    <location>
        <begin position="286"/>
        <end position="296"/>
    </location>
</feature>
<feature type="turn" evidence="11">
    <location>
        <begin position="301"/>
        <end position="303"/>
    </location>
</feature>
<feature type="strand" evidence="11">
    <location>
        <begin position="306"/>
        <end position="310"/>
    </location>
</feature>
<feature type="strand" evidence="11">
    <location>
        <begin position="319"/>
        <end position="321"/>
    </location>
</feature>
<feature type="helix" evidence="11">
    <location>
        <begin position="325"/>
        <end position="328"/>
    </location>
</feature>
<feature type="helix" evidence="11">
    <location>
        <begin position="332"/>
        <end position="336"/>
    </location>
</feature>
<feature type="turn" evidence="11">
    <location>
        <begin position="337"/>
        <end position="339"/>
    </location>
</feature>
<feature type="helix" evidence="11">
    <location>
        <begin position="341"/>
        <end position="344"/>
    </location>
</feature>
<feature type="strand" evidence="11">
    <location>
        <begin position="345"/>
        <end position="347"/>
    </location>
</feature>
<feature type="helix" evidence="11">
    <location>
        <begin position="348"/>
        <end position="362"/>
    </location>
</feature>
<feature type="strand" evidence="11">
    <location>
        <begin position="369"/>
        <end position="373"/>
    </location>
</feature>
<feature type="strand" evidence="11">
    <location>
        <begin position="376"/>
        <end position="379"/>
    </location>
</feature>
<feature type="strand" evidence="11">
    <location>
        <begin position="383"/>
        <end position="385"/>
    </location>
</feature>
<feature type="turn" evidence="11">
    <location>
        <begin position="400"/>
        <end position="403"/>
    </location>
</feature>
<feature type="helix" evidence="11">
    <location>
        <begin position="404"/>
        <end position="409"/>
    </location>
</feature>
<feature type="helix" evidence="11">
    <location>
        <begin position="414"/>
        <end position="425"/>
    </location>
</feature>
<feature type="helix" evidence="11">
    <location>
        <begin position="429"/>
        <end position="438"/>
    </location>
</feature>
<feature type="helix" evidence="11">
    <location>
        <begin position="451"/>
        <end position="473"/>
    </location>
</feature>
<feature type="helix" evidence="11">
    <location>
        <begin position="475"/>
        <end position="478"/>
    </location>
</feature>
<feature type="strand" evidence="11">
    <location>
        <begin position="481"/>
        <end position="484"/>
    </location>
</feature>
<evidence type="ECO:0000250" key="1">
    <source>
        <dbReference type="UniProtKB" id="Q5MJS3"/>
    </source>
</evidence>
<evidence type="ECO:0000250" key="2">
    <source>
        <dbReference type="UniProtKB" id="Q8IXL6"/>
    </source>
</evidence>
<evidence type="ECO:0000255" key="3"/>
<evidence type="ECO:0000256" key="4">
    <source>
        <dbReference type="SAM" id="MobiDB-lite"/>
    </source>
</evidence>
<evidence type="ECO:0000269" key="5">
    <source>
    </source>
</evidence>
<evidence type="ECO:0000303" key="6">
    <source>
    </source>
</evidence>
<evidence type="ECO:0000305" key="7"/>
<evidence type="ECO:0000312" key="8">
    <source>
        <dbReference type="WormBase" id="H03A11.1"/>
    </source>
</evidence>
<evidence type="ECO:0007744" key="9">
    <source>
        <dbReference type="PDB" id="4KQA"/>
    </source>
</evidence>
<evidence type="ECO:0007744" key="10">
    <source>
        <dbReference type="PDB" id="4KQB"/>
    </source>
</evidence>
<evidence type="ECO:0007829" key="11">
    <source>
        <dbReference type="PDB" id="4KQA"/>
    </source>
</evidence>
<evidence type="ECO:0007829" key="12">
    <source>
        <dbReference type="PDB" id="4KQB"/>
    </source>
</evidence>
<reference key="1">
    <citation type="journal article" date="1998" name="Science">
        <title>Genome sequence of the nematode C. elegans: a platform for investigating biology.</title>
        <authorList>
            <consortium name="The C. elegans sequencing consortium"/>
        </authorList>
    </citation>
    <scope>NUCLEOTIDE SEQUENCE [LARGE SCALE GENOMIC DNA]</scope>
    <source>
        <strain>Bristol N2</strain>
    </source>
</reference>
<reference evidence="9 10" key="2">
    <citation type="journal article" date="2013" name="Proc. Natl. Acad. Sci. U.S.A.">
        <title>Crystal structure of the Golgi casein kinase.</title>
        <authorList>
            <person name="Xiao J."/>
            <person name="Tagliabracci V.S."/>
            <person name="Wen J."/>
            <person name="Kim S.A."/>
            <person name="Dixon J.E."/>
        </authorList>
    </citation>
    <scope>X-RAY CRYSTALLOGRAPHY (2.60 ANGSTROMS) OF 60-512 IN COMPLEX WITH ADP AND MANGANESE</scope>
    <scope>FUNCTION</scope>
    <scope>CATALYTIC ACTIVITY</scope>
    <scope>COFACTOR</scope>
    <scope>BIOPHYSICOCHEMICAL PROPERTIES</scope>
    <scope>DISULFIDE BONDS</scope>
    <scope>GLYCOSYLATION AT ASN-113 AND ASN-242</scope>
</reference>
<proteinExistence type="evidence at protein level"/>
<protein>
    <recommendedName>
        <fullName evidence="7">Extracellular serine/threonine protein kinase CeFam20</fullName>
        <shortName evidence="6">CeFam20</shortName>
        <ecNumber evidence="5">2.7.11.1</ecNumber>
    </recommendedName>
    <alternativeName>
        <fullName evidence="6">Golgi casein kinase</fullName>
    </alternativeName>
    <alternativeName>
        <fullName evidence="2">Golgi-enriched fraction casein kinase</fullName>
        <shortName evidence="2">GEF-CK</shortName>
    </alternativeName>
</protein>
<keyword id="KW-0002">3D-structure</keyword>
<keyword id="KW-0067">ATP-binding</keyword>
<keyword id="KW-1015">Disulfide bond</keyword>
<keyword id="KW-0325">Glycoprotein</keyword>
<keyword id="KW-0333">Golgi apparatus</keyword>
<keyword id="KW-0418">Kinase</keyword>
<keyword id="KW-0464">Manganese</keyword>
<keyword id="KW-0472">Membrane</keyword>
<keyword id="KW-0479">Metal-binding</keyword>
<keyword id="KW-0547">Nucleotide-binding</keyword>
<keyword id="KW-1185">Reference proteome</keyword>
<keyword id="KW-0964">Secreted</keyword>
<keyword id="KW-0723">Serine/threonine-protein kinase</keyword>
<keyword id="KW-0735">Signal-anchor</keyword>
<keyword id="KW-0808">Transferase</keyword>
<keyword id="KW-0812">Transmembrane</keyword>
<keyword id="KW-1133">Transmembrane helix</keyword>
<dbReference type="EC" id="2.7.11.1" evidence="5"/>
<dbReference type="EMBL" id="BX284606">
    <property type="protein sequence ID" value="CAB07528.1"/>
    <property type="molecule type" value="Genomic_DNA"/>
</dbReference>
<dbReference type="PIR" id="T23035">
    <property type="entry name" value="T23035"/>
</dbReference>
<dbReference type="RefSeq" id="NP_510527.1">
    <property type="nucleotide sequence ID" value="NM_078126.5"/>
</dbReference>
<dbReference type="PDB" id="4KQA">
    <property type="method" value="X-ray"/>
    <property type="resolution" value="2.60 A"/>
    <property type="chains" value="A/B/C/D=60-512"/>
</dbReference>
<dbReference type="PDB" id="4KQB">
    <property type="method" value="X-ray"/>
    <property type="resolution" value="3.04 A"/>
    <property type="chains" value="A/B=60-512"/>
</dbReference>
<dbReference type="PDBsum" id="4KQA"/>
<dbReference type="PDBsum" id="4KQB"/>
<dbReference type="SMR" id="Q9XTW2"/>
<dbReference type="FunCoup" id="Q9XTW2">
    <property type="interactions" value="418"/>
</dbReference>
<dbReference type="STRING" id="6239.H03A11.1.1"/>
<dbReference type="GlyCosmos" id="Q9XTW2">
    <property type="glycosylation" value="2 sites, No reported glycans"/>
</dbReference>
<dbReference type="iPTMnet" id="Q9XTW2"/>
<dbReference type="PaxDb" id="6239-H03A11.1"/>
<dbReference type="PeptideAtlas" id="Q9XTW2"/>
<dbReference type="EnsemblMetazoa" id="H03A11.1.1">
    <property type="protein sequence ID" value="H03A11.1.1"/>
    <property type="gene ID" value="WBGene00010356"/>
</dbReference>
<dbReference type="GeneID" id="181616"/>
<dbReference type="KEGG" id="cel:CELE_H03A11.1"/>
<dbReference type="UCSC" id="H03A11.1">
    <property type="organism name" value="c. elegans"/>
</dbReference>
<dbReference type="AGR" id="WB:WBGene00010356"/>
<dbReference type="CTD" id="181616"/>
<dbReference type="WormBase" id="H03A11.1">
    <property type="protein sequence ID" value="CE18799"/>
    <property type="gene ID" value="WBGene00010356"/>
    <property type="gene designation" value="famk-1"/>
</dbReference>
<dbReference type="eggNOG" id="KOG3829">
    <property type="taxonomic scope" value="Eukaryota"/>
</dbReference>
<dbReference type="GeneTree" id="ENSGT00950000182951"/>
<dbReference type="HOGENOM" id="CLU_028926_3_1_1"/>
<dbReference type="InParanoid" id="Q9XTW2"/>
<dbReference type="OMA" id="NYEREWK"/>
<dbReference type="OrthoDB" id="8583677at2759"/>
<dbReference type="PhylomeDB" id="Q9XTW2"/>
<dbReference type="Reactome" id="R-CEL-381426">
    <property type="pathway name" value="Regulation of Insulin-like Growth Factor (IGF) transport and uptake by Insulin-like Growth Factor Binding Proteins (IGFBPs)"/>
</dbReference>
<dbReference type="Reactome" id="R-CEL-8957275">
    <property type="pathway name" value="Post-translational protein phosphorylation"/>
</dbReference>
<dbReference type="SABIO-RK" id="Q9XTW2"/>
<dbReference type="PRO" id="PR:Q9XTW2"/>
<dbReference type="Proteomes" id="UP000001940">
    <property type="component" value="Chromosome X"/>
</dbReference>
<dbReference type="Bgee" id="WBGene00010356">
    <property type="expression patterns" value="Expressed in pharyngeal muscle cell (C elegans) and 3 other cell types or tissues"/>
</dbReference>
<dbReference type="GO" id="GO:0005576">
    <property type="term" value="C:extracellular region"/>
    <property type="evidence" value="ECO:0007669"/>
    <property type="project" value="UniProtKB-SubCell"/>
</dbReference>
<dbReference type="GO" id="GO:0000139">
    <property type="term" value="C:Golgi membrane"/>
    <property type="evidence" value="ECO:0007669"/>
    <property type="project" value="UniProtKB-SubCell"/>
</dbReference>
<dbReference type="GO" id="GO:0005524">
    <property type="term" value="F:ATP binding"/>
    <property type="evidence" value="ECO:0007669"/>
    <property type="project" value="UniProtKB-KW"/>
</dbReference>
<dbReference type="GO" id="GO:0030145">
    <property type="term" value="F:manganese ion binding"/>
    <property type="evidence" value="ECO:0000314"/>
    <property type="project" value="UniProtKB"/>
</dbReference>
<dbReference type="GO" id="GO:0106310">
    <property type="term" value="F:protein serine kinase activity"/>
    <property type="evidence" value="ECO:0007669"/>
    <property type="project" value="RHEA"/>
</dbReference>
<dbReference type="GO" id="GO:0004674">
    <property type="term" value="F:protein serine/threonine kinase activity"/>
    <property type="evidence" value="ECO:0000314"/>
    <property type="project" value="UniProtKB"/>
</dbReference>
<dbReference type="GO" id="GO:0006468">
    <property type="term" value="P:protein phosphorylation"/>
    <property type="evidence" value="ECO:0000314"/>
    <property type="project" value="UniProtKB"/>
</dbReference>
<dbReference type="CDD" id="cd10314">
    <property type="entry name" value="FAM20_C"/>
    <property type="match status" value="1"/>
</dbReference>
<dbReference type="DisProt" id="DP02991"/>
<dbReference type="InterPro" id="IPR024869">
    <property type="entry name" value="FAM20"/>
</dbReference>
<dbReference type="InterPro" id="IPR009581">
    <property type="entry name" value="FAM20_C"/>
</dbReference>
<dbReference type="PANTHER" id="PTHR12450">
    <property type="entry name" value="DENTIN MATRIX PROTEIN 4 PROTEIN FAM20"/>
    <property type="match status" value="1"/>
</dbReference>
<dbReference type="PANTHER" id="PTHR12450:SF22">
    <property type="entry name" value="EXTRACELLULAR SERINE_THREONINE PROTEIN CG31145"/>
    <property type="match status" value="1"/>
</dbReference>
<dbReference type="Pfam" id="PF06702">
    <property type="entry name" value="Fam20C"/>
    <property type="match status" value="1"/>
</dbReference>
<sequence>MRCNIKRLFTLAIGVFAATLVIISFSKDNYEREWKQGPQSNEARAVGHQSPDLFPVGQNSLPHQPIPPSLGEKDLSDPFNFLFSSNKITLRKLYDLTKNVDFDQLRQNECKKNITLSKFWEKSEQRNVPEDDNWERFYSNIGSCSVYSDDQMIDNLLHDLNTSPIKHVHIMDGGTQVKFVFTFKNDKQAVFKPMRFGRDYESDPNHFYFSDFERHHAEIATFHLDRVLGFRRAIPTVGRVLNMTTELFEKAEKKLKKTFFFSPAKNFCFVSRCDYYCDTTHAICGLPDMKEGSVQVFLPDESAVPRKHNRSPYRRTYSKKNQVAEWQSSMNYCTDKVKTKRQYAHGRRLLDLVDIHILDYLIGNQDRHHFESFNVFNDLPSYAIHLDHGRAFGRSDFDDDDIILPLRQCCILRPSTFQTLMNFYSTPKSLTKALHESLSKDPAHPILAYKHYPAMERRLAKIMSHILECFESRGVAEVLVAEYNNPDVSDAEQNDEEQSEEHQDKKDDKKTV</sequence>
<comment type="function">
    <text evidence="5">Golgi serine/threonine protein kinase that phosphorylates secretory pathway proteins within Ser-x-Glu/pSer motifs.</text>
</comment>
<comment type="catalytic activity">
    <reaction evidence="5">
        <text>L-seryl-[protein] + ATP = O-phospho-L-seryl-[protein] + ADP + H(+)</text>
        <dbReference type="Rhea" id="RHEA:17989"/>
        <dbReference type="Rhea" id="RHEA-COMP:9863"/>
        <dbReference type="Rhea" id="RHEA-COMP:11604"/>
        <dbReference type="ChEBI" id="CHEBI:15378"/>
        <dbReference type="ChEBI" id="CHEBI:29999"/>
        <dbReference type="ChEBI" id="CHEBI:30616"/>
        <dbReference type="ChEBI" id="CHEBI:83421"/>
        <dbReference type="ChEBI" id="CHEBI:456216"/>
        <dbReference type="EC" id="2.7.11.1"/>
    </reaction>
</comment>
<comment type="catalytic activity">
    <reaction evidence="5">
        <text>L-threonyl-[protein] + ATP = O-phospho-L-threonyl-[protein] + ADP + H(+)</text>
        <dbReference type="Rhea" id="RHEA:46608"/>
        <dbReference type="Rhea" id="RHEA-COMP:11060"/>
        <dbReference type="Rhea" id="RHEA-COMP:11605"/>
        <dbReference type="ChEBI" id="CHEBI:15378"/>
        <dbReference type="ChEBI" id="CHEBI:30013"/>
        <dbReference type="ChEBI" id="CHEBI:30616"/>
        <dbReference type="ChEBI" id="CHEBI:61977"/>
        <dbReference type="ChEBI" id="CHEBI:456216"/>
        <dbReference type="EC" id="2.7.11.1"/>
    </reaction>
</comment>
<comment type="cofactor">
    <cofactor evidence="5">
        <name>Mn(2+)</name>
        <dbReference type="ChEBI" id="CHEBI:29035"/>
    </cofactor>
</comment>
<comment type="biophysicochemical properties">
    <kinetics>
        <KM evidence="5">1.2 uM for manganese/ATP</KM>
    </kinetics>
</comment>
<comment type="subcellular location">
    <subcellularLocation>
        <location evidence="2">Golgi apparatus membrane</location>
        <topology evidence="2">Single-pass type II membrane protein</topology>
    </subcellularLocation>
    <subcellularLocation>
        <location evidence="1">Secreted</location>
    </subcellularLocation>
    <text evidence="2">Resides in the Golgi apparatus membrane and is secreted following propeptide cleavage.</text>
</comment>
<comment type="similarity">
    <text evidence="7">Belongs to the FAM20 family.</text>
</comment>
<accession>Q9XTW2</accession>